<gene>
    <name evidence="1" type="primary">argH</name>
    <name type="ordered locus">HEAR1003</name>
</gene>
<evidence type="ECO:0000255" key="1">
    <source>
        <dbReference type="HAMAP-Rule" id="MF_00006"/>
    </source>
</evidence>
<keyword id="KW-0028">Amino-acid biosynthesis</keyword>
<keyword id="KW-0055">Arginine biosynthesis</keyword>
<keyword id="KW-0963">Cytoplasm</keyword>
<keyword id="KW-0456">Lyase</keyword>
<keyword id="KW-1185">Reference proteome</keyword>
<name>ARLY_HERAR</name>
<protein>
    <recommendedName>
        <fullName evidence="1">Argininosuccinate lyase</fullName>
        <shortName evidence="1">ASAL</shortName>
        <ecNumber evidence="1">4.3.2.1</ecNumber>
    </recommendedName>
    <alternativeName>
        <fullName evidence="1">Arginosuccinase</fullName>
    </alternativeName>
</protein>
<reference key="1">
    <citation type="journal article" date="2007" name="PLoS Genet.">
        <title>A tale of two oxidation states: bacterial colonization of arsenic-rich environments.</title>
        <authorList>
            <person name="Muller D."/>
            <person name="Medigue C."/>
            <person name="Koechler S."/>
            <person name="Barbe V."/>
            <person name="Barakat M."/>
            <person name="Talla E."/>
            <person name="Bonnefoy V."/>
            <person name="Krin E."/>
            <person name="Arsene-Ploetze F."/>
            <person name="Carapito C."/>
            <person name="Chandler M."/>
            <person name="Cournoyer B."/>
            <person name="Cruveiller S."/>
            <person name="Dossat C."/>
            <person name="Duval S."/>
            <person name="Heymann M."/>
            <person name="Leize E."/>
            <person name="Lieutaud A."/>
            <person name="Lievremont D."/>
            <person name="Makita Y."/>
            <person name="Mangenot S."/>
            <person name="Nitschke W."/>
            <person name="Ortet P."/>
            <person name="Perdrial N."/>
            <person name="Schoepp B."/>
            <person name="Siguier P."/>
            <person name="Simeonova D.D."/>
            <person name="Rouy Z."/>
            <person name="Segurens B."/>
            <person name="Turlin E."/>
            <person name="Vallenet D."/>
            <person name="van Dorsselaer A."/>
            <person name="Weiss S."/>
            <person name="Weissenbach J."/>
            <person name="Lett M.-C."/>
            <person name="Danchin A."/>
            <person name="Bertin P.N."/>
        </authorList>
    </citation>
    <scope>NUCLEOTIDE SEQUENCE [LARGE SCALE GENOMIC DNA]</scope>
    <source>
        <strain>ULPAs1</strain>
    </source>
</reference>
<organism>
    <name type="scientific">Herminiimonas arsenicoxydans</name>
    <dbReference type="NCBI Taxonomy" id="204773"/>
    <lineage>
        <taxon>Bacteria</taxon>
        <taxon>Pseudomonadati</taxon>
        <taxon>Pseudomonadota</taxon>
        <taxon>Betaproteobacteria</taxon>
        <taxon>Burkholderiales</taxon>
        <taxon>Oxalobacteraceae</taxon>
        <taxon>Herminiimonas</taxon>
    </lineage>
</organism>
<sequence>MTAQLSKKGEAWSARFNEPVSDLVKRYTASVFFDKRLAQVDIQGSLAHAEMLAHQNIISQEDHAEIRRGMAQILEEITAGKFEWLLDLEDVHLNIEKRLTELVGDAGKRLHTGRSRNDQVATDIRLYVRSEIDNIVGLLRDLRLALLDLAEQHADTILPGFTHMQVAQPITFGHHMLAYVEMFSRDAERMQDCRKRVNRLPLGAAALAGTTFPIDRERVAKTLGFDDVCHNSLDAVSDRDFAIEFCAAAALIMTHVSRMSEELVIWMSPRIGFIDIADRFCTGSSIMPQKKNPDVPELARGKTGRVNGHLIALLTLMKGQPLAYNKDNQEDKEPLFDTVDTVVDTLRIFADMATGITVKPDAMRAAALQGYATATDLADYLVKKGLPFRDAHEAVAHAVRACVDRGIDLSDLTLEEMQAFSKLIEADIFAVLTLEGSVAARNHVGGTAPQQVRAAIARHRAKLA</sequence>
<comment type="catalytic activity">
    <reaction evidence="1">
        <text>2-(N(omega)-L-arginino)succinate = fumarate + L-arginine</text>
        <dbReference type="Rhea" id="RHEA:24020"/>
        <dbReference type="ChEBI" id="CHEBI:29806"/>
        <dbReference type="ChEBI" id="CHEBI:32682"/>
        <dbReference type="ChEBI" id="CHEBI:57472"/>
        <dbReference type="EC" id="4.3.2.1"/>
    </reaction>
</comment>
<comment type="pathway">
    <text evidence="1">Amino-acid biosynthesis; L-arginine biosynthesis; L-arginine from L-ornithine and carbamoyl phosphate: step 3/3.</text>
</comment>
<comment type="subcellular location">
    <subcellularLocation>
        <location evidence="1">Cytoplasm</location>
    </subcellularLocation>
</comment>
<comment type="similarity">
    <text evidence="1">Belongs to the lyase 1 family. Argininosuccinate lyase subfamily.</text>
</comment>
<proteinExistence type="inferred from homology"/>
<feature type="chain" id="PRO_1000000485" description="Argininosuccinate lyase">
    <location>
        <begin position="1"/>
        <end position="464"/>
    </location>
</feature>
<dbReference type="EC" id="4.3.2.1" evidence="1"/>
<dbReference type="EMBL" id="CU207211">
    <property type="protein sequence ID" value="CAL61185.1"/>
    <property type="molecule type" value="Genomic_DNA"/>
</dbReference>
<dbReference type="SMR" id="A4G3U8"/>
<dbReference type="STRING" id="204773.HEAR1003"/>
<dbReference type="KEGG" id="har:HEAR1003"/>
<dbReference type="eggNOG" id="COG0165">
    <property type="taxonomic scope" value="Bacteria"/>
</dbReference>
<dbReference type="HOGENOM" id="CLU_027272_2_3_4"/>
<dbReference type="OrthoDB" id="9769623at2"/>
<dbReference type="UniPathway" id="UPA00068">
    <property type="reaction ID" value="UER00114"/>
</dbReference>
<dbReference type="Proteomes" id="UP000006697">
    <property type="component" value="Chromosome"/>
</dbReference>
<dbReference type="GO" id="GO:0005829">
    <property type="term" value="C:cytosol"/>
    <property type="evidence" value="ECO:0007669"/>
    <property type="project" value="TreeGrafter"/>
</dbReference>
<dbReference type="GO" id="GO:0004056">
    <property type="term" value="F:argininosuccinate lyase activity"/>
    <property type="evidence" value="ECO:0007669"/>
    <property type="project" value="UniProtKB-UniRule"/>
</dbReference>
<dbReference type="GO" id="GO:0042450">
    <property type="term" value="P:arginine biosynthetic process via ornithine"/>
    <property type="evidence" value="ECO:0007669"/>
    <property type="project" value="InterPro"/>
</dbReference>
<dbReference type="GO" id="GO:0006526">
    <property type="term" value="P:L-arginine biosynthetic process"/>
    <property type="evidence" value="ECO:0007669"/>
    <property type="project" value="UniProtKB-UniRule"/>
</dbReference>
<dbReference type="CDD" id="cd01359">
    <property type="entry name" value="Argininosuccinate_lyase"/>
    <property type="match status" value="1"/>
</dbReference>
<dbReference type="FunFam" id="1.10.275.10:FF:000002">
    <property type="entry name" value="Argininosuccinate lyase"/>
    <property type="match status" value="1"/>
</dbReference>
<dbReference type="FunFam" id="1.10.40.30:FF:000001">
    <property type="entry name" value="Argininosuccinate lyase"/>
    <property type="match status" value="1"/>
</dbReference>
<dbReference type="FunFam" id="1.20.200.10:FF:000015">
    <property type="entry name" value="argininosuccinate lyase isoform X2"/>
    <property type="match status" value="1"/>
</dbReference>
<dbReference type="Gene3D" id="1.10.40.30">
    <property type="entry name" value="Fumarase/aspartase (C-terminal domain)"/>
    <property type="match status" value="1"/>
</dbReference>
<dbReference type="Gene3D" id="1.20.200.10">
    <property type="entry name" value="Fumarase/aspartase (Central domain)"/>
    <property type="match status" value="1"/>
</dbReference>
<dbReference type="Gene3D" id="1.10.275.10">
    <property type="entry name" value="Fumarase/aspartase (N-terminal domain)"/>
    <property type="match status" value="1"/>
</dbReference>
<dbReference type="HAMAP" id="MF_00006">
    <property type="entry name" value="Arg_succ_lyase"/>
    <property type="match status" value="1"/>
</dbReference>
<dbReference type="InterPro" id="IPR029419">
    <property type="entry name" value="Arg_succ_lyase_C"/>
</dbReference>
<dbReference type="InterPro" id="IPR009049">
    <property type="entry name" value="Argininosuccinate_lyase"/>
</dbReference>
<dbReference type="InterPro" id="IPR024083">
    <property type="entry name" value="Fumarase/histidase_N"/>
</dbReference>
<dbReference type="InterPro" id="IPR020557">
    <property type="entry name" value="Fumarate_lyase_CS"/>
</dbReference>
<dbReference type="InterPro" id="IPR000362">
    <property type="entry name" value="Fumarate_lyase_fam"/>
</dbReference>
<dbReference type="InterPro" id="IPR022761">
    <property type="entry name" value="Fumarate_lyase_N"/>
</dbReference>
<dbReference type="InterPro" id="IPR008948">
    <property type="entry name" value="L-Aspartase-like"/>
</dbReference>
<dbReference type="NCBIfam" id="TIGR00838">
    <property type="entry name" value="argH"/>
    <property type="match status" value="1"/>
</dbReference>
<dbReference type="PANTHER" id="PTHR43814">
    <property type="entry name" value="ARGININOSUCCINATE LYASE"/>
    <property type="match status" value="1"/>
</dbReference>
<dbReference type="PANTHER" id="PTHR43814:SF1">
    <property type="entry name" value="ARGININOSUCCINATE LYASE"/>
    <property type="match status" value="1"/>
</dbReference>
<dbReference type="Pfam" id="PF14698">
    <property type="entry name" value="ASL_C2"/>
    <property type="match status" value="1"/>
</dbReference>
<dbReference type="Pfam" id="PF00206">
    <property type="entry name" value="Lyase_1"/>
    <property type="match status" value="1"/>
</dbReference>
<dbReference type="PRINTS" id="PR00145">
    <property type="entry name" value="ARGSUCLYASE"/>
</dbReference>
<dbReference type="PRINTS" id="PR00149">
    <property type="entry name" value="FUMRATELYASE"/>
</dbReference>
<dbReference type="SUPFAM" id="SSF48557">
    <property type="entry name" value="L-aspartase-like"/>
    <property type="match status" value="1"/>
</dbReference>
<dbReference type="PROSITE" id="PS00163">
    <property type="entry name" value="FUMARATE_LYASES"/>
    <property type="match status" value="1"/>
</dbReference>
<accession>A4G3U8</accession>